<accession>Q32AN4</accession>
<gene>
    <name evidence="1" type="primary">rtcA</name>
    <name type="ordered locus">SDY_3655</name>
</gene>
<sequence>MKRMIALDGAQGEGGGQILRSALSLSMITGQPFTITGIRAGRAKPGLLRQHLTAVKAATEICRATVEGAELGSQRLVFRPGTVRGGDYRFAIGSAGSCTLVLQTVLPALWFADGPSRVEVSGGTDNPSAPPADFIRRVLEPLLAKIGIHQQTTLLRHGFYPVGGGVVATEVSPVASFNTLQLGERGNIVQMRGEVLLAGVPRHVAEREIATLAGSFPLHEQYIHNLPRDQGPGNTVSLEVESENITERFFVVGEKHVSAEVVAAQLVKEVKRYLASPAAVGEYLADQLVLPMALAGAGQFTVAHPSCHLLTNIAVVERFLPVRFTLAETNGVTRVMITKLTD</sequence>
<protein>
    <recommendedName>
        <fullName evidence="1">RNA 3'-terminal phosphate cyclase</fullName>
        <shortName evidence="1">RNA cyclase</shortName>
        <shortName evidence="1">RNA-3'-phosphate cyclase</shortName>
        <ecNumber evidence="1">6.5.1.4</ecNumber>
    </recommendedName>
</protein>
<name>RTCA_SHIDS</name>
<feature type="chain" id="PRO_0000264799" description="RNA 3'-terminal phosphate cyclase">
    <location>
        <begin position="1"/>
        <end position="342"/>
    </location>
</feature>
<feature type="active site" description="Tele-AMP-histidine intermediate" evidence="1">
    <location>
        <position position="308"/>
    </location>
</feature>
<feature type="binding site" evidence="1">
    <location>
        <position position="103"/>
    </location>
    <ligand>
        <name>ATP</name>
        <dbReference type="ChEBI" id="CHEBI:30616"/>
    </ligand>
</feature>
<feature type="binding site" evidence="1">
    <location>
        <begin position="283"/>
        <end position="287"/>
    </location>
    <ligand>
        <name>ATP</name>
        <dbReference type="ChEBI" id="CHEBI:30616"/>
    </ligand>
</feature>
<keyword id="KW-0067">ATP-binding</keyword>
<keyword id="KW-0963">Cytoplasm</keyword>
<keyword id="KW-0436">Ligase</keyword>
<keyword id="KW-0547">Nucleotide-binding</keyword>
<keyword id="KW-1185">Reference proteome</keyword>
<proteinExistence type="inferred from homology"/>
<dbReference type="EC" id="6.5.1.4" evidence="1"/>
<dbReference type="EMBL" id="CP000034">
    <property type="protein sequence ID" value="ABB63621.1"/>
    <property type="status" value="ALT_INIT"/>
    <property type="molecule type" value="Genomic_DNA"/>
</dbReference>
<dbReference type="RefSeq" id="WP_024259430.1">
    <property type="nucleotide sequence ID" value="NC_007606.1"/>
</dbReference>
<dbReference type="RefSeq" id="YP_405112.1">
    <property type="nucleotide sequence ID" value="NC_007606.1"/>
</dbReference>
<dbReference type="SMR" id="Q32AN4"/>
<dbReference type="STRING" id="300267.SDY_3655"/>
<dbReference type="EnsemblBacteria" id="ABB63621">
    <property type="protein sequence ID" value="ABB63621"/>
    <property type="gene ID" value="SDY_3655"/>
</dbReference>
<dbReference type="KEGG" id="sdy:SDY_3655"/>
<dbReference type="PATRIC" id="fig|300267.13.peg.4337"/>
<dbReference type="HOGENOM" id="CLU_027882_0_0_6"/>
<dbReference type="Proteomes" id="UP000002716">
    <property type="component" value="Chromosome"/>
</dbReference>
<dbReference type="GO" id="GO:0005737">
    <property type="term" value="C:cytoplasm"/>
    <property type="evidence" value="ECO:0007669"/>
    <property type="project" value="UniProtKB-SubCell"/>
</dbReference>
<dbReference type="GO" id="GO:0005524">
    <property type="term" value="F:ATP binding"/>
    <property type="evidence" value="ECO:0007669"/>
    <property type="project" value="UniProtKB-KW"/>
</dbReference>
<dbReference type="GO" id="GO:0003963">
    <property type="term" value="F:RNA-3'-phosphate cyclase activity"/>
    <property type="evidence" value="ECO:0007669"/>
    <property type="project" value="UniProtKB-UniRule"/>
</dbReference>
<dbReference type="GO" id="GO:0006396">
    <property type="term" value="P:RNA processing"/>
    <property type="evidence" value="ECO:0007669"/>
    <property type="project" value="InterPro"/>
</dbReference>
<dbReference type="FunFam" id="3.65.10.20:FF:000002">
    <property type="entry name" value="GM19193"/>
    <property type="match status" value="1"/>
</dbReference>
<dbReference type="FunFam" id="3.30.360.20:FF:000003">
    <property type="entry name" value="RNA 3'-terminal phosphate cyclase"/>
    <property type="match status" value="1"/>
</dbReference>
<dbReference type="Gene3D" id="3.65.10.20">
    <property type="entry name" value="RNA 3'-terminal phosphate cyclase domain"/>
    <property type="match status" value="1"/>
</dbReference>
<dbReference type="Gene3D" id="3.30.360.20">
    <property type="entry name" value="RNA 3'-terminal phosphate cyclase, insert domain"/>
    <property type="match status" value="1"/>
</dbReference>
<dbReference type="HAMAP" id="MF_00200">
    <property type="entry name" value="RTC"/>
    <property type="match status" value="1"/>
</dbReference>
<dbReference type="InterPro" id="IPR013791">
    <property type="entry name" value="RNA3'-term_phos_cycl_insert"/>
</dbReference>
<dbReference type="InterPro" id="IPR023797">
    <property type="entry name" value="RNA3'_phos_cyclase_dom"/>
</dbReference>
<dbReference type="InterPro" id="IPR037136">
    <property type="entry name" value="RNA3'_phos_cyclase_dom_sf"/>
</dbReference>
<dbReference type="InterPro" id="IPR000228">
    <property type="entry name" value="RNA3'_term_phos_cyc"/>
</dbReference>
<dbReference type="InterPro" id="IPR017770">
    <property type="entry name" value="RNA3'_term_phos_cyc_type_1"/>
</dbReference>
<dbReference type="InterPro" id="IPR020719">
    <property type="entry name" value="RNA3'_term_phos_cycl-like_CS"/>
</dbReference>
<dbReference type="InterPro" id="IPR013792">
    <property type="entry name" value="RNA3'P_cycl/enolpyr_Trfase_a/b"/>
</dbReference>
<dbReference type="InterPro" id="IPR036553">
    <property type="entry name" value="RPTC_insert"/>
</dbReference>
<dbReference type="NCBIfam" id="NF003246">
    <property type="entry name" value="PRK04204.1-2"/>
    <property type="match status" value="1"/>
</dbReference>
<dbReference type="NCBIfam" id="NF003247">
    <property type="entry name" value="PRK04204.1-3"/>
    <property type="match status" value="1"/>
</dbReference>
<dbReference type="NCBIfam" id="TIGR03399">
    <property type="entry name" value="RNA_3prim_cycl"/>
    <property type="match status" value="1"/>
</dbReference>
<dbReference type="PANTHER" id="PTHR11096">
    <property type="entry name" value="RNA 3' TERMINAL PHOSPHATE CYCLASE"/>
    <property type="match status" value="1"/>
</dbReference>
<dbReference type="PANTHER" id="PTHR11096:SF0">
    <property type="entry name" value="RNA 3'-TERMINAL PHOSPHATE CYCLASE"/>
    <property type="match status" value="1"/>
</dbReference>
<dbReference type="Pfam" id="PF01137">
    <property type="entry name" value="RTC"/>
    <property type="match status" value="1"/>
</dbReference>
<dbReference type="Pfam" id="PF05189">
    <property type="entry name" value="RTC_insert"/>
    <property type="match status" value="1"/>
</dbReference>
<dbReference type="PIRSF" id="PIRSF005378">
    <property type="entry name" value="RNA3'_term_phos_cycl_euk"/>
    <property type="match status" value="1"/>
</dbReference>
<dbReference type="SUPFAM" id="SSF55205">
    <property type="entry name" value="EPT/RTPC-like"/>
    <property type="match status" value="2"/>
</dbReference>
<dbReference type="SUPFAM" id="SSF52913">
    <property type="entry name" value="RNA 3'-terminal phosphate cyclase, RPTC, insert domain"/>
    <property type="match status" value="1"/>
</dbReference>
<dbReference type="PROSITE" id="PS01287">
    <property type="entry name" value="RTC"/>
    <property type="match status" value="1"/>
</dbReference>
<reference key="1">
    <citation type="journal article" date="2005" name="Nucleic Acids Res.">
        <title>Genome dynamics and diversity of Shigella species, the etiologic agents of bacillary dysentery.</title>
        <authorList>
            <person name="Yang F."/>
            <person name="Yang J."/>
            <person name="Zhang X."/>
            <person name="Chen L."/>
            <person name="Jiang Y."/>
            <person name="Yan Y."/>
            <person name="Tang X."/>
            <person name="Wang J."/>
            <person name="Xiong Z."/>
            <person name="Dong J."/>
            <person name="Xue Y."/>
            <person name="Zhu Y."/>
            <person name="Xu X."/>
            <person name="Sun L."/>
            <person name="Chen S."/>
            <person name="Nie H."/>
            <person name="Peng J."/>
            <person name="Xu J."/>
            <person name="Wang Y."/>
            <person name="Yuan Z."/>
            <person name="Wen Y."/>
            <person name="Yao Z."/>
            <person name="Shen Y."/>
            <person name="Qiang B."/>
            <person name="Hou Y."/>
            <person name="Yu J."/>
            <person name="Jin Q."/>
        </authorList>
    </citation>
    <scope>NUCLEOTIDE SEQUENCE [LARGE SCALE GENOMIC DNA]</scope>
    <source>
        <strain>Sd197</strain>
    </source>
</reference>
<comment type="function">
    <text evidence="1">Catalyzes the conversion of 3'-phosphate to a 2',3'-cyclic phosphodiester at the end of RNA. The mechanism of action of the enzyme occurs in 3 steps: (A) adenylation of the enzyme by ATP; (B) transfer of adenylate to an RNA-N3'P to produce RNA-N3'PP5'A; (C) and attack of the adjacent 2'-hydroxyl on the 3'-phosphorus in the diester linkage to produce the cyclic end product. The biological role of this enzyme is unknown but it is likely to function in some aspects of cellular RNA processing.</text>
</comment>
<comment type="catalytic activity">
    <reaction evidence="1">
        <text>a 3'-end 3'-phospho-ribonucleotide-RNA + ATP = a 3'-end 2',3'-cyclophospho-ribonucleotide-RNA + AMP + diphosphate</text>
        <dbReference type="Rhea" id="RHEA:23976"/>
        <dbReference type="Rhea" id="RHEA-COMP:10463"/>
        <dbReference type="Rhea" id="RHEA-COMP:10464"/>
        <dbReference type="ChEBI" id="CHEBI:30616"/>
        <dbReference type="ChEBI" id="CHEBI:33019"/>
        <dbReference type="ChEBI" id="CHEBI:83062"/>
        <dbReference type="ChEBI" id="CHEBI:83064"/>
        <dbReference type="ChEBI" id="CHEBI:456215"/>
        <dbReference type="EC" id="6.5.1.4"/>
    </reaction>
</comment>
<comment type="subcellular location">
    <subcellularLocation>
        <location evidence="1">Cytoplasm</location>
    </subcellularLocation>
</comment>
<comment type="similarity">
    <text evidence="1">Belongs to the RNA 3'-terminal cyclase family. Type 1 subfamily.</text>
</comment>
<comment type="sequence caution" evidence="2">
    <conflict type="erroneous initiation">
        <sequence resource="EMBL-CDS" id="ABB63621"/>
    </conflict>
</comment>
<evidence type="ECO:0000255" key="1">
    <source>
        <dbReference type="HAMAP-Rule" id="MF_00200"/>
    </source>
</evidence>
<evidence type="ECO:0000305" key="2"/>
<organism>
    <name type="scientific">Shigella dysenteriae serotype 1 (strain Sd197)</name>
    <dbReference type="NCBI Taxonomy" id="300267"/>
    <lineage>
        <taxon>Bacteria</taxon>
        <taxon>Pseudomonadati</taxon>
        <taxon>Pseudomonadota</taxon>
        <taxon>Gammaproteobacteria</taxon>
        <taxon>Enterobacterales</taxon>
        <taxon>Enterobacteriaceae</taxon>
        <taxon>Shigella</taxon>
    </lineage>
</organism>